<dbReference type="EC" id="2.7.7.15" evidence="5"/>
<dbReference type="EMBL" id="AY189949">
    <property type="protein sequence ID" value="AAO39004.1"/>
    <property type="molecule type" value="mRNA"/>
</dbReference>
<dbReference type="EMBL" id="AY189950">
    <property type="protein sequence ID" value="AAO39005.1"/>
    <property type="molecule type" value="mRNA"/>
</dbReference>
<dbReference type="EMBL" id="AK032027">
    <property type="protein sequence ID" value="BAC27658.1"/>
    <property type="status" value="ALT_INIT"/>
    <property type="molecule type" value="mRNA"/>
</dbReference>
<dbReference type="EMBL" id="AK053577">
    <property type="protein sequence ID" value="BAC35435.1"/>
    <property type="molecule type" value="mRNA"/>
</dbReference>
<dbReference type="EMBL" id="AK149304">
    <property type="protein sequence ID" value="BAE28801.1"/>
    <property type="molecule type" value="mRNA"/>
</dbReference>
<dbReference type="EMBL" id="BC048917">
    <property type="protein sequence ID" value="AAH48917.1"/>
    <property type="molecule type" value="mRNA"/>
</dbReference>
<dbReference type="CCDS" id="CCDS30274.1">
    <molecule id="Q811Q9-1"/>
</dbReference>
<dbReference type="CCDS" id="CCDS41061.1">
    <molecule id="Q811Q9-2"/>
</dbReference>
<dbReference type="RefSeq" id="NP_808214.1">
    <molecule id="Q811Q9-2"/>
    <property type="nucleotide sequence ID" value="NM_177546.2"/>
</dbReference>
<dbReference type="RefSeq" id="NP_997593.1">
    <molecule id="Q811Q9-1"/>
    <property type="nucleotide sequence ID" value="NM_211138.1"/>
</dbReference>
<dbReference type="SMR" id="Q811Q9"/>
<dbReference type="BioGRID" id="231814">
    <property type="interactions" value="1"/>
</dbReference>
<dbReference type="FunCoup" id="Q811Q9">
    <property type="interactions" value="667"/>
</dbReference>
<dbReference type="STRING" id="10090.ENSMUSP00000044280"/>
<dbReference type="iPTMnet" id="Q811Q9"/>
<dbReference type="PhosphoSitePlus" id="Q811Q9"/>
<dbReference type="SwissPalm" id="Q811Q9"/>
<dbReference type="jPOST" id="Q811Q9"/>
<dbReference type="PaxDb" id="10090-ENSMUSP00000044280"/>
<dbReference type="PeptideAtlas" id="Q811Q9"/>
<dbReference type="ProteomicsDB" id="294035">
    <molecule id="Q811Q9-1"/>
</dbReference>
<dbReference type="ProteomicsDB" id="294036">
    <molecule id="Q811Q9-2"/>
</dbReference>
<dbReference type="Antibodypedia" id="505">
    <property type="antibodies" value="57 antibodies from 20 providers"/>
</dbReference>
<dbReference type="DNASU" id="236899"/>
<dbReference type="Ensembl" id="ENSMUST00000045898.4">
    <molecule id="Q811Q9-1"/>
    <property type="protein sequence ID" value="ENSMUSP00000044280.4"/>
    <property type="gene ID" value="ENSMUSG00000035246.17"/>
</dbReference>
<dbReference type="Ensembl" id="ENSMUST00000113933.9">
    <molecule id="Q811Q9-2"/>
    <property type="protein sequence ID" value="ENSMUSP00000109566.3"/>
    <property type="gene ID" value="ENSMUSG00000035246.17"/>
</dbReference>
<dbReference type="GeneID" id="236899"/>
<dbReference type="KEGG" id="mmu:236899"/>
<dbReference type="UCSC" id="uc009tsv.1">
    <molecule id="Q811Q9-2"/>
    <property type="organism name" value="mouse"/>
</dbReference>
<dbReference type="UCSC" id="uc009tsw.1">
    <molecule id="Q811Q9-1"/>
    <property type="organism name" value="mouse"/>
</dbReference>
<dbReference type="AGR" id="MGI:2147987"/>
<dbReference type="CTD" id="9468"/>
<dbReference type="MGI" id="MGI:2147987">
    <property type="gene designation" value="Pcyt1b"/>
</dbReference>
<dbReference type="VEuPathDB" id="HostDB:ENSMUSG00000035246"/>
<dbReference type="eggNOG" id="KOG2804">
    <property type="taxonomic scope" value="Eukaryota"/>
</dbReference>
<dbReference type="GeneTree" id="ENSGT00940000156040"/>
<dbReference type="HOGENOM" id="CLU_034585_4_2_1"/>
<dbReference type="InParanoid" id="Q811Q9"/>
<dbReference type="OMA" id="FEDFSIC"/>
<dbReference type="OrthoDB" id="17102at2759"/>
<dbReference type="PhylomeDB" id="Q811Q9"/>
<dbReference type="TreeFam" id="TF106336"/>
<dbReference type="BRENDA" id="2.7.7.15">
    <property type="organism ID" value="3474"/>
</dbReference>
<dbReference type="Reactome" id="R-MMU-1483191">
    <property type="pathway name" value="Synthesis of PC"/>
</dbReference>
<dbReference type="UniPathway" id="UPA00753">
    <property type="reaction ID" value="UER00739"/>
</dbReference>
<dbReference type="BioGRID-ORCS" id="236899">
    <property type="hits" value="2 hits in 79 CRISPR screens"/>
</dbReference>
<dbReference type="ChiTaRS" id="Pcyt1b">
    <property type="organism name" value="mouse"/>
</dbReference>
<dbReference type="PRO" id="PR:Q811Q9"/>
<dbReference type="Proteomes" id="UP000000589">
    <property type="component" value="Chromosome X"/>
</dbReference>
<dbReference type="RNAct" id="Q811Q9">
    <property type="molecule type" value="protein"/>
</dbReference>
<dbReference type="Bgee" id="ENSMUSG00000035246">
    <property type="expression patterns" value="Expressed in animal zygote and 152 other cell types or tissues"/>
</dbReference>
<dbReference type="GO" id="GO:0005783">
    <property type="term" value="C:endoplasmic reticulum"/>
    <property type="evidence" value="ECO:0000250"/>
    <property type="project" value="UniProtKB"/>
</dbReference>
<dbReference type="GO" id="GO:0004105">
    <property type="term" value="F:choline-phosphate cytidylyltransferase activity"/>
    <property type="evidence" value="ECO:0000314"/>
    <property type="project" value="UniProtKB"/>
</dbReference>
<dbReference type="GO" id="GO:0006657">
    <property type="term" value="P:CDP-choline pathway"/>
    <property type="evidence" value="ECO:0000314"/>
    <property type="project" value="UniProtKB"/>
</dbReference>
<dbReference type="GO" id="GO:0001541">
    <property type="term" value="P:ovarian follicle development"/>
    <property type="evidence" value="ECO:0000315"/>
    <property type="project" value="MGI"/>
</dbReference>
<dbReference type="GO" id="GO:0006656">
    <property type="term" value="P:phosphatidylcholine biosynthetic process"/>
    <property type="evidence" value="ECO:0000314"/>
    <property type="project" value="UniProtKB"/>
</dbReference>
<dbReference type="GO" id="GO:0007283">
    <property type="term" value="P:spermatogenesis"/>
    <property type="evidence" value="ECO:0000315"/>
    <property type="project" value="MGI"/>
</dbReference>
<dbReference type="CDD" id="cd02174">
    <property type="entry name" value="CCT"/>
    <property type="match status" value="1"/>
</dbReference>
<dbReference type="FunFam" id="3.40.50.620:FF:000016">
    <property type="entry name" value="Putative choline-phosphate cytidylyltransferase B"/>
    <property type="match status" value="1"/>
</dbReference>
<dbReference type="Gene3D" id="3.40.50.620">
    <property type="entry name" value="HUPs"/>
    <property type="match status" value="1"/>
</dbReference>
<dbReference type="InterPro" id="IPR041723">
    <property type="entry name" value="CCT"/>
</dbReference>
<dbReference type="InterPro" id="IPR004821">
    <property type="entry name" value="Cyt_trans-like"/>
</dbReference>
<dbReference type="InterPro" id="IPR045049">
    <property type="entry name" value="Pcy1-like"/>
</dbReference>
<dbReference type="InterPro" id="IPR014729">
    <property type="entry name" value="Rossmann-like_a/b/a_fold"/>
</dbReference>
<dbReference type="NCBIfam" id="TIGR00125">
    <property type="entry name" value="cyt_tran_rel"/>
    <property type="match status" value="1"/>
</dbReference>
<dbReference type="PANTHER" id="PTHR10739:SF20">
    <property type="entry name" value="CHOLINE-PHOSPHATE CYTIDYLYLTRANSFERASE B"/>
    <property type="match status" value="1"/>
</dbReference>
<dbReference type="PANTHER" id="PTHR10739">
    <property type="entry name" value="CYTIDYLYLTRANSFERASE"/>
    <property type="match status" value="1"/>
</dbReference>
<dbReference type="Pfam" id="PF01467">
    <property type="entry name" value="CTP_transf_like"/>
    <property type="match status" value="1"/>
</dbReference>
<dbReference type="SUPFAM" id="SSF52374">
    <property type="entry name" value="Nucleotidylyl transferase"/>
    <property type="match status" value="1"/>
</dbReference>
<name>PCY1B_MOUSE</name>
<reference key="1">
    <citation type="journal article" date="2003" name="Biochim. Biophys. Acta">
        <title>Gene structure, expression and identification of a new CTP:phosphocholine cytidylyltransferase beta isoform.</title>
        <authorList>
            <person name="Karim M."/>
            <person name="Jackson P."/>
            <person name="Jackowski S."/>
        </authorList>
    </citation>
    <scope>NUCLEOTIDE SEQUENCE [MRNA] (ISOFORMS 1 AND 2)</scope>
    <scope>TISSUE SPECIFICITY (ISOFORMS 1 AND 2)</scope>
    <scope>DEVELOPMENTAL STAGE (ISOFORMS 1 AND 2)</scope>
    <scope>FUNCTION (ISOFORMS 1 AND 2)</scope>
    <scope>CATALYTIC ACTIVITY (ISOFORMS 1 AND 2)</scope>
    <source>
        <strain>BALB/cJ</strain>
        <tissue>Brain</tissue>
    </source>
</reference>
<reference key="2">
    <citation type="journal article" date="2005" name="Science">
        <title>The transcriptional landscape of the mammalian genome.</title>
        <authorList>
            <person name="Carninci P."/>
            <person name="Kasukawa T."/>
            <person name="Katayama S."/>
            <person name="Gough J."/>
            <person name="Frith M.C."/>
            <person name="Maeda N."/>
            <person name="Oyama R."/>
            <person name="Ravasi T."/>
            <person name="Lenhard B."/>
            <person name="Wells C."/>
            <person name="Kodzius R."/>
            <person name="Shimokawa K."/>
            <person name="Bajic V.B."/>
            <person name="Brenner S.E."/>
            <person name="Batalov S."/>
            <person name="Forrest A.R."/>
            <person name="Zavolan M."/>
            <person name="Davis M.J."/>
            <person name="Wilming L.G."/>
            <person name="Aidinis V."/>
            <person name="Allen J.E."/>
            <person name="Ambesi-Impiombato A."/>
            <person name="Apweiler R."/>
            <person name="Aturaliya R.N."/>
            <person name="Bailey T.L."/>
            <person name="Bansal M."/>
            <person name="Baxter L."/>
            <person name="Beisel K.W."/>
            <person name="Bersano T."/>
            <person name="Bono H."/>
            <person name="Chalk A.M."/>
            <person name="Chiu K.P."/>
            <person name="Choudhary V."/>
            <person name="Christoffels A."/>
            <person name="Clutterbuck D.R."/>
            <person name="Crowe M.L."/>
            <person name="Dalla E."/>
            <person name="Dalrymple B.P."/>
            <person name="de Bono B."/>
            <person name="Della Gatta G."/>
            <person name="di Bernardo D."/>
            <person name="Down T."/>
            <person name="Engstrom P."/>
            <person name="Fagiolini M."/>
            <person name="Faulkner G."/>
            <person name="Fletcher C.F."/>
            <person name="Fukushima T."/>
            <person name="Furuno M."/>
            <person name="Futaki S."/>
            <person name="Gariboldi M."/>
            <person name="Georgii-Hemming P."/>
            <person name="Gingeras T.R."/>
            <person name="Gojobori T."/>
            <person name="Green R.E."/>
            <person name="Gustincich S."/>
            <person name="Harbers M."/>
            <person name="Hayashi Y."/>
            <person name="Hensch T.K."/>
            <person name="Hirokawa N."/>
            <person name="Hill D."/>
            <person name="Huminiecki L."/>
            <person name="Iacono M."/>
            <person name="Ikeo K."/>
            <person name="Iwama A."/>
            <person name="Ishikawa T."/>
            <person name="Jakt M."/>
            <person name="Kanapin A."/>
            <person name="Katoh M."/>
            <person name="Kawasawa Y."/>
            <person name="Kelso J."/>
            <person name="Kitamura H."/>
            <person name="Kitano H."/>
            <person name="Kollias G."/>
            <person name="Krishnan S.P."/>
            <person name="Kruger A."/>
            <person name="Kummerfeld S.K."/>
            <person name="Kurochkin I.V."/>
            <person name="Lareau L.F."/>
            <person name="Lazarevic D."/>
            <person name="Lipovich L."/>
            <person name="Liu J."/>
            <person name="Liuni S."/>
            <person name="McWilliam S."/>
            <person name="Madan Babu M."/>
            <person name="Madera M."/>
            <person name="Marchionni L."/>
            <person name="Matsuda H."/>
            <person name="Matsuzawa S."/>
            <person name="Miki H."/>
            <person name="Mignone F."/>
            <person name="Miyake S."/>
            <person name="Morris K."/>
            <person name="Mottagui-Tabar S."/>
            <person name="Mulder N."/>
            <person name="Nakano N."/>
            <person name="Nakauchi H."/>
            <person name="Ng P."/>
            <person name="Nilsson R."/>
            <person name="Nishiguchi S."/>
            <person name="Nishikawa S."/>
            <person name="Nori F."/>
            <person name="Ohara O."/>
            <person name="Okazaki Y."/>
            <person name="Orlando V."/>
            <person name="Pang K.C."/>
            <person name="Pavan W.J."/>
            <person name="Pavesi G."/>
            <person name="Pesole G."/>
            <person name="Petrovsky N."/>
            <person name="Piazza S."/>
            <person name="Reed J."/>
            <person name="Reid J.F."/>
            <person name="Ring B.Z."/>
            <person name="Ringwald M."/>
            <person name="Rost B."/>
            <person name="Ruan Y."/>
            <person name="Salzberg S.L."/>
            <person name="Sandelin A."/>
            <person name="Schneider C."/>
            <person name="Schoenbach C."/>
            <person name="Sekiguchi K."/>
            <person name="Semple C.A."/>
            <person name="Seno S."/>
            <person name="Sessa L."/>
            <person name="Sheng Y."/>
            <person name="Shibata Y."/>
            <person name="Shimada H."/>
            <person name="Shimada K."/>
            <person name="Silva D."/>
            <person name="Sinclair B."/>
            <person name="Sperling S."/>
            <person name="Stupka E."/>
            <person name="Sugiura K."/>
            <person name="Sultana R."/>
            <person name="Takenaka Y."/>
            <person name="Taki K."/>
            <person name="Tammoja K."/>
            <person name="Tan S.L."/>
            <person name="Tang S."/>
            <person name="Taylor M.S."/>
            <person name="Tegner J."/>
            <person name="Teichmann S.A."/>
            <person name="Ueda H.R."/>
            <person name="van Nimwegen E."/>
            <person name="Verardo R."/>
            <person name="Wei C.L."/>
            <person name="Yagi K."/>
            <person name="Yamanishi H."/>
            <person name="Zabarovsky E."/>
            <person name="Zhu S."/>
            <person name="Zimmer A."/>
            <person name="Hide W."/>
            <person name="Bult C."/>
            <person name="Grimmond S.M."/>
            <person name="Teasdale R.D."/>
            <person name="Liu E.T."/>
            <person name="Brusic V."/>
            <person name="Quackenbush J."/>
            <person name="Wahlestedt C."/>
            <person name="Mattick J.S."/>
            <person name="Hume D.A."/>
            <person name="Kai C."/>
            <person name="Sasaki D."/>
            <person name="Tomaru Y."/>
            <person name="Fukuda S."/>
            <person name="Kanamori-Katayama M."/>
            <person name="Suzuki M."/>
            <person name="Aoki J."/>
            <person name="Arakawa T."/>
            <person name="Iida J."/>
            <person name="Imamura K."/>
            <person name="Itoh M."/>
            <person name="Kato T."/>
            <person name="Kawaji H."/>
            <person name="Kawagashira N."/>
            <person name="Kawashima T."/>
            <person name="Kojima M."/>
            <person name="Kondo S."/>
            <person name="Konno H."/>
            <person name="Nakano K."/>
            <person name="Ninomiya N."/>
            <person name="Nishio T."/>
            <person name="Okada M."/>
            <person name="Plessy C."/>
            <person name="Shibata K."/>
            <person name="Shiraki T."/>
            <person name="Suzuki S."/>
            <person name="Tagami M."/>
            <person name="Waki K."/>
            <person name="Watahiki A."/>
            <person name="Okamura-Oho Y."/>
            <person name="Suzuki H."/>
            <person name="Kawai J."/>
            <person name="Hayashizaki Y."/>
        </authorList>
    </citation>
    <scope>NUCLEOTIDE SEQUENCE [LARGE SCALE MRNA] (ISOFORM 2)</scope>
    <scope>NUCLEOTIDE SEQUENCE [LARGE SCALE MRNA] OF 18-369 (ISOFORM 1)</scope>
    <source>
        <strain>C57BL/6J</strain>
        <tissue>Eye</tissue>
        <tissue>Medulla oblongata</tissue>
        <tissue>Retina</tissue>
    </source>
</reference>
<reference key="3">
    <citation type="journal article" date="2004" name="Genome Res.">
        <title>The status, quality, and expansion of the NIH full-length cDNA project: the Mammalian Gene Collection (MGC).</title>
        <authorList>
            <consortium name="The MGC Project Team"/>
        </authorList>
    </citation>
    <scope>NUCLEOTIDE SEQUENCE [LARGE SCALE MRNA] (ISOFORM 1)</scope>
    <source>
        <tissue>Olfactory epithelium</tissue>
    </source>
</reference>
<reference key="4">
    <citation type="journal article" date="2004" name="Mol. Cell. Biol.">
        <title>Disruption of CCTbeta2 expression leads to gonadal dysfunction.</title>
        <authorList>
            <person name="Jackowski S."/>
            <person name="Rehg J.E."/>
            <person name="Zhang Y.-M."/>
            <person name="Wang J."/>
            <person name="Miller K."/>
            <person name="Jackson P."/>
            <person name="Karim M.A."/>
        </authorList>
    </citation>
    <scope>FUNCTION (ISOFORM 1)</scope>
    <scope>TISSUE SPECIFICITY (ISOFORM 1)</scope>
    <scope>DISRUPTION PHENOTYPE (ISOFORM 1)</scope>
</reference>
<reference key="5">
    <citation type="journal article" date="2004" name="Mol. Cell. Proteomics">
        <title>Phosphoproteomic analysis of the developing mouse brain.</title>
        <authorList>
            <person name="Ballif B.A."/>
            <person name="Villen J."/>
            <person name="Beausoleil S.A."/>
            <person name="Schwartz D."/>
            <person name="Gygi S.P."/>
        </authorList>
    </citation>
    <scope>PHOSPHORYLATION [LARGE SCALE ANALYSIS] AT SER-315 AND SER-319</scope>
    <scope>IDENTIFICATION BY MASS SPECTROMETRY [LARGE SCALE ANALYSIS]</scope>
    <source>
        <tissue>Embryonic brain</tissue>
    </source>
</reference>
<reference key="6">
    <citation type="journal article" date="2010" name="Cell">
        <title>A tissue-specific atlas of mouse protein phosphorylation and expression.</title>
        <authorList>
            <person name="Huttlin E.L."/>
            <person name="Jedrychowski M.P."/>
            <person name="Elias J.E."/>
            <person name="Goswami T."/>
            <person name="Rad R."/>
            <person name="Beausoleil S.A."/>
            <person name="Villen J."/>
            <person name="Haas W."/>
            <person name="Sowa M.E."/>
            <person name="Gygi S.P."/>
        </authorList>
    </citation>
    <scope>PHOSPHORYLATION [LARGE SCALE ANALYSIS] AT SER-315; SER-319; SER-323; SER-360 AND SER-362</scope>
    <scope>IDENTIFICATION BY MASS SPECTROMETRY [LARGE SCALE ANALYSIS]</scope>
    <source>
        <tissue>Brain</tissue>
        <tissue>Testis</tissue>
    </source>
</reference>
<evidence type="ECO:0000250" key="1">
    <source>
        <dbReference type="UniProtKB" id="P19836"/>
    </source>
</evidence>
<evidence type="ECO:0000250" key="2">
    <source>
        <dbReference type="UniProtKB" id="Q9QZC4"/>
    </source>
</evidence>
<evidence type="ECO:0000250" key="3">
    <source>
        <dbReference type="UniProtKB" id="Q9Y5K3"/>
    </source>
</evidence>
<evidence type="ECO:0000256" key="4">
    <source>
        <dbReference type="SAM" id="MobiDB-lite"/>
    </source>
</evidence>
<evidence type="ECO:0000269" key="5">
    <source>
    </source>
</evidence>
<evidence type="ECO:0000269" key="6">
    <source>
    </source>
</evidence>
<evidence type="ECO:0000303" key="7">
    <source>
    </source>
</evidence>
<evidence type="ECO:0000303" key="8">
    <source>
    </source>
</evidence>
<evidence type="ECO:0000305" key="9"/>
<evidence type="ECO:0000305" key="10">
    <source>
    </source>
</evidence>
<evidence type="ECO:0007744" key="11">
    <source>
    </source>
</evidence>
<evidence type="ECO:0007744" key="12">
    <source>
    </source>
</evidence>
<keyword id="KW-0025">Alternative splicing</keyword>
<keyword id="KW-0963">Cytoplasm</keyword>
<keyword id="KW-0256">Endoplasmic reticulum</keyword>
<keyword id="KW-0444">Lipid biosynthesis</keyword>
<keyword id="KW-0443">Lipid metabolism</keyword>
<keyword id="KW-0548">Nucleotidyltransferase</keyword>
<keyword id="KW-0594">Phospholipid biosynthesis</keyword>
<keyword id="KW-1208">Phospholipid metabolism</keyword>
<keyword id="KW-0597">Phosphoprotein</keyword>
<keyword id="KW-1185">Reference proteome</keyword>
<keyword id="KW-0808">Transferase</keyword>
<sequence length="369" mass="41900">MPVLTTDAESETGIPKSLSNEPPSETMEEIEHTCPQPRLTLTAPAPFADESSCQCQAPHEKLTVAQARLGTPVDRPVRVYADGIFDLFHSGHARALMQAKTLFPNSYLLVGVCSDDLTHKFKGFTVMNEAERYEALRHCRYVDEVIRDAPWTLTPEFLEKHKIDFVAHDDIPYSSAGSDDVYKHIKEAGMFVPTQRTEGISTSDIITRIVRDYDVYARRNLQRGYTAKELNVSFINEKKYRFQNQVDKMKEKVKNVEERSKEFVNRVEEKSHDLIQKWEEKSREFIGNFLELFGPDGAWKQMFQERSSRMLQALSPKQSPVSSPTRSRSPSRSPSPTFSWLPNKTSPPSSPKAASASISSMSEGDEDEK</sequence>
<accession>Q811Q9</accession>
<accession>Q3UEW0</accession>
<accession>Q80Y63</accession>
<accession>Q811Q8</accession>
<accession>Q8BKD2</accession>
<accession>Q8C085</accession>
<gene>
    <name type="primary">Pcyt1b</name>
</gene>
<feature type="chain" id="PRO_0000247762" description="Choline-phosphate cytidylyltransferase B">
    <location>
        <begin position="1"/>
        <end position="369"/>
    </location>
</feature>
<feature type="region of interest" description="Disordered" evidence="4">
    <location>
        <begin position="1"/>
        <end position="27"/>
    </location>
</feature>
<feature type="region of interest" description="Disordered" evidence="4">
    <location>
        <begin position="309"/>
        <end position="369"/>
    </location>
</feature>
<feature type="compositionally biased region" description="Low complexity" evidence="4">
    <location>
        <begin position="319"/>
        <end position="339"/>
    </location>
</feature>
<feature type="compositionally biased region" description="Low complexity" evidence="4">
    <location>
        <begin position="351"/>
        <end position="362"/>
    </location>
</feature>
<feature type="binding site" evidence="1">
    <location>
        <position position="84"/>
    </location>
    <ligand>
        <name>CTP</name>
        <dbReference type="ChEBI" id="CHEBI:37563"/>
    </ligand>
</feature>
<feature type="binding site" evidence="1">
    <location>
        <position position="85"/>
    </location>
    <ligand>
        <name>CTP</name>
        <dbReference type="ChEBI" id="CHEBI:37563"/>
    </ligand>
</feature>
<feature type="binding site" evidence="1">
    <location>
        <position position="92"/>
    </location>
    <ligand>
        <name>CTP</name>
        <dbReference type="ChEBI" id="CHEBI:37563"/>
    </ligand>
</feature>
<feature type="binding site" evidence="1">
    <location>
        <position position="122"/>
    </location>
    <ligand>
        <name>CTP</name>
        <dbReference type="ChEBI" id="CHEBI:37563"/>
    </ligand>
</feature>
<feature type="binding site" evidence="1">
    <location>
        <position position="122"/>
    </location>
    <ligand>
        <name>phosphocholine</name>
        <dbReference type="ChEBI" id="CHEBI:295975"/>
    </ligand>
</feature>
<feature type="binding site" evidence="1">
    <location>
        <position position="151"/>
    </location>
    <ligand>
        <name>phosphocholine</name>
        <dbReference type="ChEBI" id="CHEBI:295975"/>
    </ligand>
</feature>
<feature type="binding site" evidence="1">
    <location>
        <position position="168"/>
    </location>
    <ligand>
        <name>CTP</name>
        <dbReference type="ChEBI" id="CHEBI:37563"/>
    </ligand>
</feature>
<feature type="binding site" evidence="1">
    <location>
        <position position="169"/>
    </location>
    <ligand>
        <name>CTP</name>
        <dbReference type="ChEBI" id="CHEBI:37563"/>
    </ligand>
</feature>
<feature type="binding site" evidence="1">
    <location>
        <position position="173"/>
    </location>
    <ligand>
        <name>CTP</name>
        <dbReference type="ChEBI" id="CHEBI:37563"/>
    </ligand>
</feature>
<feature type="binding site" evidence="1">
    <location>
        <position position="195"/>
    </location>
    <ligand>
        <name>CTP</name>
        <dbReference type="ChEBI" id="CHEBI:37563"/>
    </ligand>
</feature>
<feature type="binding site" evidence="1">
    <location>
        <position position="196"/>
    </location>
    <ligand>
        <name>CTP</name>
        <dbReference type="ChEBI" id="CHEBI:37563"/>
    </ligand>
</feature>
<feature type="binding site" evidence="1">
    <location>
        <position position="197"/>
    </location>
    <ligand>
        <name>CTP</name>
        <dbReference type="ChEBI" id="CHEBI:37563"/>
    </ligand>
</feature>
<feature type="binding site" evidence="1">
    <location>
        <position position="200"/>
    </location>
    <ligand>
        <name>CTP</name>
        <dbReference type="ChEBI" id="CHEBI:37563"/>
    </ligand>
</feature>
<feature type="modified residue" description="Phosphoserine" evidence="11 12">
    <location>
        <position position="315"/>
    </location>
</feature>
<feature type="modified residue" description="Phosphoserine" evidence="11 12">
    <location>
        <position position="319"/>
    </location>
</feature>
<feature type="modified residue" description="Phosphoserine" evidence="1">
    <location>
        <position position="322"/>
    </location>
</feature>
<feature type="modified residue" description="Phosphoserine" evidence="12">
    <location>
        <position position="323"/>
    </location>
</feature>
<feature type="modified residue" description="Phosphoserine" evidence="1">
    <location>
        <position position="329"/>
    </location>
</feature>
<feature type="modified residue" description="Phosphoserine" evidence="1">
    <location>
        <position position="331"/>
    </location>
</feature>
<feature type="modified residue" description="Phosphoserine" evidence="2">
    <location>
        <position position="335"/>
    </location>
</feature>
<feature type="modified residue" description="Phosphothreonine" evidence="1">
    <location>
        <position position="345"/>
    </location>
</feature>
<feature type="modified residue" description="Phosphoserine" evidence="1">
    <location>
        <position position="346"/>
    </location>
</feature>
<feature type="modified residue" description="Phosphoserine" evidence="1">
    <location>
        <position position="349"/>
    </location>
</feature>
<feature type="modified residue" description="Phosphoserine" evidence="1">
    <location>
        <position position="350"/>
    </location>
</feature>
<feature type="modified residue" description="Phosphoserine" evidence="1">
    <location>
        <position position="355"/>
    </location>
</feature>
<feature type="modified residue" description="Phosphoserine" evidence="12">
    <location>
        <position position="360"/>
    </location>
</feature>
<feature type="modified residue" description="Phosphoserine" evidence="12">
    <location>
        <position position="362"/>
    </location>
</feature>
<feature type="splice variant" id="VSP_020041" description="In isoform 2." evidence="7 8">
    <location>
        <begin position="1"/>
        <end position="24"/>
    </location>
</feature>
<feature type="splice variant" id="VSP_020042" description="In isoform 2." evidence="7 8">
    <original>ETMEEIEHTCPQPRL</original>
    <variation>MDKDEFSRK</variation>
    <location>
        <begin position="25"/>
        <end position="39"/>
    </location>
</feature>
<feature type="sequence conflict" description="In Ref. 1; AAO39004/AAO39005." evidence="9" ref="1">
    <original>V</original>
    <variation>G</variation>
    <location>
        <position position="73"/>
    </location>
</feature>
<feature type="sequence conflict" description="In Ref. 2; BAE28801." evidence="9" ref="2">
    <original>V</original>
    <variation>I</variation>
    <location>
        <position position="77"/>
    </location>
</feature>
<comment type="function">
    <molecule>Isoform 1</molecule>
    <text evidence="5 6">Catalyzes the key rate-limiting step in the CDP-choline pathway for phosphatidylcholine biosynthesis (PubMed:12842190). Plays an important role in ovary maturation and the maintenance of sperm production (PubMed:15143167).</text>
</comment>
<comment type="function">
    <molecule>Isoform 2</molecule>
    <text evidence="5">Catalyzes the key rate-limiting step in the CDP-choline pathway for phosphatidylcholine biosynthesis.</text>
</comment>
<comment type="catalytic activity">
    <reaction evidence="5">
        <text>phosphocholine + CTP + H(+) = CDP-choline + diphosphate</text>
        <dbReference type="Rhea" id="RHEA:18997"/>
        <dbReference type="ChEBI" id="CHEBI:15378"/>
        <dbReference type="ChEBI" id="CHEBI:33019"/>
        <dbReference type="ChEBI" id="CHEBI:37563"/>
        <dbReference type="ChEBI" id="CHEBI:58779"/>
        <dbReference type="ChEBI" id="CHEBI:295975"/>
        <dbReference type="EC" id="2.7.7.15"/>
    </reaction>
    <physiologicalReaction direction="left-to-right" evidence="10">
        <dbReference type="Rhea" id="RHEA:18998"/>
    </physiologicalReaction>
</comment>
<comment type="pathway">
    <text evidence="5">Phospholipid metabolism; phosphatidylcholine biosynthesis; phosphatidylcholine from phosphocholine: step 1/2.</text>
</comment>
<comment type="subunit">
    <text evidence="1">Homodimer.</text>
</comment>
<comment type="subcellular location">
    <subcellularLocation>
        <location evidence="3">Endoplasmic reticulum</location>
    </subcellularLocation>
    <subcellularLocation>
        <location evidence="3">Cytoplasm</location>
    </subcellularLocation>
</comment>
<comment type="alternative products">
    <event type="alternative splicing"/>
    <isoform>
        <id>Q811Q9-1</id>
        <name>1</name>
        <name evidence="7">CCTbeta2</name>
        <sequence type="displayed"/>
    </isoform>
    <isoform>
        <id>Q811Q9-2</id>
        <name>2</name>
        <name evidence="7">CCTbeta3</name>
        <sequence type="described" ref="VSP_020041 VSP_020042"/>
    </isoform>
</comment>
<comment type="tissue specificity">
    <molecule>Isoform 1</molecule>
    <text evidence="5 6">Highly expressed in brain (at protein level) (PubMed:12842190). Expressed in liver (at protein level) (PubMed:12842190). Expressed at lower levels in lung and gonads (PubMed:15143167).</text>
</comment>
<comment type="tissue specificity">
    <molecule>Isoform 2</molecule>
    <text evidence="5 6">Expressed in brain (at protein level) (PubMed:12842190). Expressed at lower levels in lung and gonads (PubMed:15143167).</text>
</comment>
<comment type="developmental stage">
    <molecule>Isoform 1</molecule>
    <text evidence="5">Expression is low at 7 dpc, reaches a maximum at 15 dpc and decreases at 17 dpc.</text>
</comment>
<comment type="developmental stage">
    <molecule>Isoform 2</molecule>
    <text evidence="5">Not expressed in embryo. Expression starts at 5 weeks.</text>
</comment>
<comment type="disruption phenotype">
    <text evidence="6">Female mice lacking isoform 1 have reduced fecundity due to failure in ovary maturation. Male mice lacking isoform 1 have reduced fecundity due to testicular degeneration.</text>
</comment>
<comment type="similarity">
    <text evidence="9">Belongs to the cytidylyltransferase family.</text>
</comment>
<comment type="sequence caution" evidence="9">
    <conflict type="erroneous initiation">
        <sequence resource="EMBL-CDS" id="BAC27658"/>
    </conflict>
</comment>
<proteinExistence type="evidence at protein level"/>
<protein>
    <recommendedName>
        <fullName>Choline-phosphate cytidylyltransferase B</fullName>
        <ecNumber evidence="5">2.7.7.15</ecNumber>
    </recommendedName>
    <alternativeName>
        <fullName>CCT-beta</fullName>
    </alternativeName>
    <alternativeName>
        <fullName>CTP:phosphocholine cytidylyltransferase B</fullName>
        <shortName>CCT B</shortName>
        <shortName>CT B</shortName>
    </alternativeName>
    <alternativeName>
        <fullName>Phosphorylcholine transferase B</fullName>
    </alternativeName>
</protein>
<organism>
    <name type="scientific">Mus musculus</name>
    <name type="common">Mouse</name>
    <dbReference type="NCBI Taxonomy" id="10090"/>
    <lineage>
        <taxon>Eukaryota</taxon>
        <taxon>Metazoa</taxon>
        <taxon>Chordata</taxon>
        <taxon>Craniata</taxon>
        <taxon>Vertebrata</taxon>
        <taxon>Euteleostomi</taxon>
        <taxon>Mammalia</taxon>
        <taxon>Eutheria</taxon>
        <taxon>Euarchontoglires</taxon>
        <taxon>Glires</taxon>
        <taxon>Rodentia</taxon>
        <taxon>Myomorpha</taxon>
        <taxon>Muroidea</taxon>
        <taxon>Muridae</taxon>
        <taxon>Murinae</taxon>
        <taxon>Mus</taxon>
        <taxon>Mus</taxon>
    </lineage>
</organism>